<dbReference type="EMBL" id="AE004091">
    <property type="protein sequence ID" value="AAG08938.1"/>
    <property type="molecule type" value="Genomic_DNA"/>
</dbReference>
<dbReference type="PIR" id="B82952">
    <property type="entry name" value="B82952"/>
</dbReference>
<dbReference type="RefSeq" id="NP_254240.1">
    <property type="nucleotide sequence ID" value="NC_002516.2"/>
</dbReference>
<dbReference type="RefSeq" id="WP_003097128.1">
    <property type="nucleotide sequence ID" value="NZ_QZGE01000012.1"/>
</dbReference>
<dbReference type="SMR" id="Q9HT21"/>
<dbReference type="FunCoup" id="Q9HT21">
    <property type="interactions" value="473"/>
</dbReference>
<dbReference type="STRING" id="208964.PA5553"/>
<dbReference type="PaxDb" id="208964-PA5553"/>
<dbReference type="DNASU" id="878082"/>
<dbReference type="GeneID" id="878082"/>
<dbReference type="KEGG" id="pae:PA5553"/>
<dbReference type="PATRIC" id="fig|208964.12.peg.5819"/>
<dbReference type="PseudoCAP" id="PA5553"/>
<dbReference type="HOGENOM" id="CLU_084338_2_0_6"/>
<dbReference type="InParanoid" id="Q9HT21"/>
<dbReference type="OrthoDB" id="9791445at2"/>
<dbReference type="PhylomeDB" id="Q9HT21"/>
<dbReference type="BioCyc" id="PAER208964:G1FZ6-5680-MONOMER"/>
<dbReference type="Proteomes" id="UP000002438">
    <property type="component" value="Chromosome"/>
</dbReference>
<dbReference type="GO" id="GO:0005886">
    <property type="term" value="C:plasma membrane"/>
    <property type="evidence" value="ECO:0007669"/>
    <property type="project" value="UniProtKB-SubCell"/>
</dbReference>
<dbReference type="GO" id="GO:0045259">
    <property type="term" value="C:proton-transporting ATP synthase complex"/>
    <property type="evidence" value="ECO:0000250"/>
    <property type="project" value="PseudoCAP"/>
</dbReference>
<dbReference type="GO" id="GO:0005524">
    <property type="term" value="F:ATP binding"/>
    <property type="evidence" value="ECO:0007669"/>
    <property type="project" value="UniProtKB-UniRule"/>
</dbReference>
<dbReference type="GO" id="GO:0046933">
    <property type="term" value="F:proton-transporting ATP synthase activity, rotational mechanism"/>
    <property type="evidence" value="ECO:0000250"/>
    <property type="project" value="PseudoCAP"/>
</dbReference>
<dbReference type="GO" id="GO:0015986">
    <property type="term" value="P:proton motive force-driven ATP synthesis"/>
    <property type="evidence" value="ECO:0000318"/>
    <property type="project" value="GO_Central"/>
</dbReference>
<dbReference type="CDD" id="cd12152">
    <property type="entry name" value="F1-ATPase_delta"/>
    <property type="match status" value="1"/>
</dbReference>
<dbReference type="FunFam" id="2.60.15.10:FF:000001">
    <property type="entry name" value="ATP synthase epsilon chain"/>
    <property type="match status" value="1"/>
</dbReference>
<dbReference type="Gene3D" id="1.20.5.440">
    <property type="entry name" value="ATP synthase delta/epsilon subunit, C-terminal domain"/>
    <property type="match status" value="1"/>
</dbReference>
<dbReference type="Gene3D" id="2.60.15.10">
    <property type="entry name" value="F0F1 ATP synthase delta/epsilon subunit, N-terminal"/>
    <property type="match status" value="1"/>
</dbReference>
<dbReference type="HAMAP" id="MF_00530">
    <property type="entry name" value="ATP_synth_epsil_bac"/>
    <property type="match status" value="1"/>
</dbReference>
<dbReference type="InterPro" id="IPR036794">
    <property type="entry name" value="ATP_F1_dsu/esu_C_sf"/>
</dbReference>
<dbReference type="InterPro" id="IPR001469">
    <property type="entry name" value="ATP_synth_F1_dsu/esu"/>
</dbReference>
<dbReference type="InterPro" id="IPR020546">
    <property type="entry name" value="ATP_synth_F1_dsu/esu_N"/>
</dbReference>
<dbReference type="InterPro" id="IPR020547">
    <property type="entry name" value="ATP_synth_F1_esu_C"/>
</dbReference>
<dbReference type="InterPro" id="IPR036771">
    <property type="entry name" value="ATPsynth_dsu/esu_N"/>
</dbReference>
<dbReference type="NCBIfam" id="TIGR01216">
    <property type="entry name" value="ATP_synt_epsi"/>
    <property type="match status" value="1"/>
</dbReference>
<dbReference type="NCBIfam" id="NF001847">
    <property type="entry name" value="PRK00571.1-4"/>
    <property type="match status" value="1"/>
</dbReference>
<dbReference type="PANTHER" id="PTHR13822">
    <property type="entry name" value="ATP SYNTHASE DELTA/EPSILON CHAIN"/>
    <property type="match status" value="1"/>
</dbReference>
<dbReference type="PANTHER" id="PTHR13822:SF10">
    <property type="entry name" value="ATP SYNTHASE EPSILON CHAIN, CHLOROPLASTIC"/>
    <property type="match status" value="1"/>
</dbReference>
<dbReference type="Pfam" id="PF00401">
    <property type="entry name" value="ATP-synt_DE"/>
    <property type="match status" value="1"/>
</dbReference>
<dbReference type="Pfam" id="PF02823">
    <property type="entry name" value="ATP-synt_DE_N"/>
    <property type="match status" value="1"/>
</dbReference>
<dbReference type="SUPFAM" id="SSF46604">
    <property type="entry name" value="Epsilon subunit of F1F0-ATP synthase C-terminal domain"/>
    <property type="match status" value="1"/>
</dbReference>
<dbReference type="SUPFAM" id="SSF51344">
    <property type="entry name" value="Epsilon subunit of F1F0-ATP synthase N-terminal domain"/>
    <property type="match status" value="1"/>
</dbReference>
<sequence>MAITVHCDIVSAEAEIFSGLVEMVIAHGALGDLGIAPGHAPLITDLKPGPIRLVKQGGEQEVYYISGGFLEVQPNMVKVLADTVVRAGDLDEAAAQEALKAAEKALQGKGAEFDYSAAAARLAEAAAQLRTVQQLRKKFGG</sequence>
<proteinExistence type="inferred from homology"/>
<evidence type="ECO:0000255" key="1">
    <source>
        <dbReference type="HAMAP-Rule" id="MF_00530"/>
    </source>
</evidence>
<feature type="chain" id="PRO_0000188180" description="ATP synthase epsilon chain">
    <location>
        <begin position="1"/>
        <end position="141"/>
    </location>
</feature>
<comment type="function">
    <text evidence="1">Produces ATP from ADP in the presence of a proton gradient across the membrane.</text>
</comment>
<comment type="subunit">
    <text>F-type ATPases have 2 components, CF(1) - the catalytic core - and CF(0) - the membrane proton channel. CF(1) has five subunits: alpha(3), beta(3), gamma(1), delta(1), epsilon(1). CF(0) has three main subunits: a, b and c.</text>
</comment>
<comment type="subcellular location">
    <subcellularLocation>
        <location evidence="1">Cell inner membrane</location>
        <topology evidence="1">Peripheral membrane protein</topology>
    </subcellularLocation>
</comment>
<comment type="similarity">
    <text evidence="1">Belongs to the ATPase epsilon chain family.</text>
</comment>
<name>ATPE_PSEAE</name>
<gene>
    <name evidence="1" type="primary">atpC</name>
    <name type="ordered locus">PA5553</name>
</gene>
<accession>Q9HT21</accession>
<protein>
    <recommendedName>
        <fullName evidence="1">ATP synthase epsilon chain</fullName>
    </recommendedName>
    <alternativeName>
        <fullName evidence="1">ATP synthase F1 sector epsilon subunit</fullName>
    </alternativeName>
    <alternativeName>
        <fullName evidence="1">F-ATPase epsilon subunit</fullName>
    </alternativeName>
</protein>
<keyword id="KW-0066">ATP synthesis</keyword>
<keyword id="KW-0997">Cell inner membrane</keyword>
<keyword id="KW-1003">Cell membrane</keyword>
<keyword id="KW-0139">CF(1)</keyword>
<keyword id="KW-0375">Hydrogen ion transport</keyword>
<keyword id="KW-0406">Ion transport</keyword>
<keyword id="KW-0472">Membrane</keyword>
<keyword id="KW-1185">Reference proteome</keyword>
<keyword id="KW-0813">Transport</keyword>
<organism>
    <name type="scientific">Pseudomonas aeruginosa (strain ATCC 15692 / DSM 22644 / CIP 104116 / JCM 14847 / LMG 12228 / 1C / PRS 101 / PAO1)</name>
    <dbReference type="NCBI Taxonomy" id="208964"/>
    <lineage>
        <taxon>Bacteria</taxon>
        <taxon>Pseudomonadati</taxon>
        <taxon>Pseudomonadota</taxon>
        <taxon>Gammaproteobacteria</taxon>
        <taxon>Pseudomonadales</taxon>
        <taxon>Pseudomonadaceae</taxon>
        <taxon>Pseudomonas</taxon>
    </lineage>
</organism>
<reference key="1">
    <citation type="journal article" date="2000" name="Nature">
        <title>Complete genome sequence of Pseudomonas aeruginosa PAO1, an opportunistic pathogen.</title>
        <authorList>
            <person name="Stover C.K."/>
            <person name="Pham X.-Q.T."/>
            <person name="Erwin A.L."/>
            <person name="Mizoguchi S.D."/>
            <person name="Warrener P."/>
            <person name="Hickey M.J."/>
            <person name="Brinkman F.S.L."/>
            <person name="Hufnagle W.O."/>
            <person name="Kowalik D.J."/>
            <person name="Lagrou M."/>
            <person name="Garber R.L."/>
            <person name="Goltry L."/>
            <person name="Tolentino E."/>
            <person name="Westbrock-Wadman S."/>
            <person name="Yuan Y."/>
            <person name="Brody L.L."/>
            <person name="Coulter S.N."/>
            <person name="Folger K.R."/>
            <person name="Kas A."/>
            <person name="Larbig K."/>
            <person name="Lim R.M."/>
            <person name="Smith K.A."/>
            <person name="Spencer D.H."/>
            <person name="Wong G.K.-S."/>
            <person name="Wu Z."/>
            <person name="Paulsen I.T."/>
            <person name="Reizer J."/>
            <person name="Saier M.H. Jr."/>
            <person name="Hancock R.E.W."/>
            <person name="Lory S."/>
            <person name="Olson M.V."/>
        </authorList>
    </citation>
    <scope>NUCLEOTIDE SEQUENCE [LARGE SCALE GENOMIC DNA]</scope>
    <source>
        <strain>ATCC 15692 / DSM 22644 / CIP 104116 / JCM 14847 / LMG 12228 / 1C / PRS 101 / PAO1</strain>
    </source>
</reference>